<reference key="1">
    <citation type="journal article" date="2001" name="Genome Res.">
        <title>Towards a catalog of human genes and proteins: sequencing and analysis of 500 novel complete protein coding human cDNAs.</title>
        <authorList>
            <person name="Wiemann S."/>
            <person name="Weil B."/>
            <person name="Wellenreuther R."/>
            <person name="Gassenhuber J."/>
            <person name="Glassl S."/>
            <person name="Ansorge W."/>
            <person name="Boecher M."/>
            <person name="Bloecker H."/>
            <person name="Bauersachs S."/>
            <person name="Blum H."/>
            <person name="Lauber J."/>
            <person name="Duesterhoeft A."/>
            <person name="Beyer A."/>
            <person name="Koehrer K."/>
            <person name="Strack N."/>
            <person name="Mewes H.-W."/>
            <person name="Ottenwaelder B."/>
            <person name="Obermaier B."/>
            <person name="Tampe J."/>
            <person name="Heubner D."/>
            <person name="Wambutt R."/>
            <person name="Korn B."/>
            <person name="Klein M."/>
            <person name="Poustka A."/>
        </authorList>
    </citation>
    <scope>NUCLEOTIDE SEQUENCE [LARGE SCALE MRNA]</scope>
    <source>
        <tissue>Amygdala</tissue>
    </source>
</reference>
<reference key="2">
    <citation type="journal article" date="2005" name="Nature">
        <title>The DNA sequence of the human X chromosome.</title>
        <authorList>
            <person name="Ross M.T."/>
            <person name="Grafham D.V."/>
            <person name="Coffey A.J."/>
            <person name="Scherer S."/>
            <person name="McLay K."/>
            <person name="Muzny D."/>
            <person name="Platzer M."/>
            <person name="Howell G.R."/>
            <person name="Burrows C."/>
            <person name="Bird C.P."/>
            <person name="Frankish A."/>
            <person name="Lovell F.L."/>
            <person name="Howe K.L."/>
            <person name="Ashurst J.L."/>
            <person name="Fulton R.S."/>
            <person name="Sudbrak R."/>
            <person name="Wen G."/>
            <person name="Jones M.C."/>
            <person name="Hurles M.E."/>
            <person name="Andrews T.D."/>
            <person name="Scott C.E."/>
            <person name="Searle S."/>
            <person name="Ramser J."/>
            <person name="Whittaker A."/>
            <person name="Deadman R."/>
            <person name="Carter N.P."/>
            <person name="Hunt S.E."/>
            <person name="Chen R."/>
            <person name="Cree A."/>
            <person name="Gunaratne P."/>
            <person name="Havlak P."/>
            <person name="Hodgson A."/>
            <person name="Metzker M.L."/>
            <person name="Richards S."/>
            <person name="Scott G."/>
            <person name="Steffen D."/>
            <person name="Sodergren E."/>
            <person name="Wheeler D.A."/>
            <person name="Worley K.C."/>
            <person name="Ainscough R."/>
            <person name="Ambrose K.D."/>
            <person name="Ansari-Lari M.A."/>
            <person name="Aradhya S."/>
            <person name="Ashwell R.I."/>
            <person name="Babbage A.K."/>
            <person name="Bagguley C.L."/>
            <person name="Ballabio A."/>
            <person name="Banerjee R."/>
            <person name="Barker G.E."/>
            <person name="Barlow K.F."/>
            <person name="Barrett I.P."/>
            <person name="Bates K.N."/>
            <person name="Beare D.M."/>
            <person name="Beasley H."/>
            <person name="Beasley O."/>
            <person name="Beck A."/>
            <person name="Bethel G."/>
            <person name="Blechschmidt K."/>
            <person name="Brady N."/>
            <person name="Bray-Allen S."/>
            <person name="Bridgeman A.M."/>
            <person name="Brown A.J."/>
            <person name="Brown M.J."/>
            <person name="Bonnin D."/>
            <person name="Bruford E.A."/>
            <person name="Buhay C."/>
            <person name="Burch P."/>
            <person name="Burford D."/>
            <person name="Burgess J."/>
            <person name="Burrill W."/>
            <person name="Burton J."/>
            <person name="Bye J.M."/>
            <person name="Carder C."/>
            <person name="Carrel L."/>
            <person name="Chako J."/>
            <person name="Chapman J.C."/>
            <person name="Chavez D."/>
            <person name="Chen E."/>
            <person name="Chen G."/>
            <person name="Chen Y."/>
            <person name="Chen Z."/>
            <person name="Chinault C."/>
            <person name="Ciccodicola A."/>
            <person name="Clark S.Y."/>
            <person name="Clarke G."/>
            <person name="Clee C.M."/>
            <person name="Clegg S."/>
            <person name="Clerc-Blankenburg K."/>
            <person name="Clifford K."/>
            <person name="Cobley V."/>
            <person name="Cole C.G."/>
            <person name="Conquer J.S."/>
            <person name="Corby N."/>
            <person name="Connor R.E."/>
            <person name="David R."/>
            <person name="Davies J."/>
            <person name="Davis C."/>
            <person name="Davis J."/>
            <person name="Delgado O."/>
            <person name="Deshazo D."/>
            <person name="Dhami P."/>
            <person name="Ding Y."/>
            <person name="Dinh H."/>
            <person name="Dodsworth S."/>
            <person name="Draper H."/>
            <person name="Dugan-Rocha S."/>
            <person name="Dunham A."/>
            <person name="Dunn M."/>
            <person name="Durbin K.J."/>
            <person name="Dutta I."/>
            <person name="Eades T."/>
            <person name="Ellwood M."/>
            <person name="Emery-Cohen A."/>
            <person name="Errington H."/>
            <person name="Evans K.L."/>
            <person name="Faulkner L."/>
            <person name="Francis F."/>
            <person name="Frankland J."/>
            <person name="Fraser A.E."/>
            <person name="Galgoczy P."/>
            <person name="Gilbert J."/>
            <person name="Gill R."/>
            <person name="Gloeckner G."/>
            <person name="Gregory S.G."/>
            <person name="Gribble S."/>
            <person name="Griffiths C."/>
            <person name="Grocock R."/>
            <person name="Gu Y."/>
            <person name="Gwilliam R."/>
            <person name="Hamilton C."/>
            <person name="Hart E.A."/>
            <person name="Hawes A."/>
            <person name="Heath P.D."/>
            <person name="Heitmann K."/>
            <person name="Hennig S."/>
            <person name="Hernandez J."/>
            <person name="Hinzmann B."/>
            <person name="Ho S."/>
            <person name="Hoffs M."/>
            <person name="Howden P.J."/>
            <person name="Huckle E.J."/>
            <person name="Hume J."/>
            <person name="Hunt P.J."/>
            <person name="Hunt A.R."/>
            <person name="Isherwood J."/>
            <person name="Jacob L."/>
            <person name="Johnson D."/>
            <person name="Jones S."/>
            <person name="de Jong P.J."/>
            <person name="Joseph S.S."/>
            <person name="Keenan S."/>
            <person name="Kelly S."/>
            <person name="Kershaw J.K."/>
            <person name="Khan Z."/>
            <person name="Kioschis P."/>
            <person name="Klages S."/>
            <person name="Knights A.J."/>
            <person name="Kosiura A."/>
            <person name="Kovar-Smith C."/>
            <person name="Laird G.K."/>
            <person name="Langford C."/>
            <person name="Lawlor S."/>
            <person name="Leversha M."/>
            <person name="Lewis L."/>
            <person name="Liu W."/>
            <person name="Lloyd C."/>
            <person name="Lloyd D.M."/>
            <person name="Loulseged H."/>
            <person name="Loveland J.E."/>
            <person name="Lovell J.D."/>
            <person name="Lozado R."/>
            <person name="Lu J."/>
            <person name="Lyne R."/>
            <person name="Ma J."/>
            <person name="Maheshwari M."/>
            <person name="Matthews L.H."/>
            <person name="McDowall J."/>
            <person name="McLaren S."/>
            <person name="McMurray A."/>
            <person name="Meidl P."/>
            <person name="Meitinger T."/>
            <person name="Milne S."/>
            <person name="Miner G."/>
            <person name="Mistry S.L."/>
            <person name="Morgan M."/>
            <person name="Morris S."/>
            <person name="Mueller I."/>
            <person name="Mullikin J.C."/>
            <person name="Nguyen N."/>
            <person name="Nordsiek G."/>
            <person name="Nyakatura G."/>
            <person name="O'dell C.N."/>
            <person name="Okwuonu G."/>
            <person name="Palmer S."/>
            <person name="Pandian R."/>
            <person name="Parker D."/>
            <person name="Parrish J."/>
            <person name="Pasternak S."/>
            <person name="Patel D."/>
            <person name="Pearce A.V."/>
            <person name="Pearson D.M."/>
            <person name="Pelan S.E."/>
            <person name="Perez L."/>
            <person name="Porter K.M."/>
            <person name="Ramsey Y."/>
            <person name="Reichwald K."/>
            <person name="Rhodes S."/>
            <person name="Ridler K.A."/>
            <person name="Schlessinger D."/>
            <person name="Schueler M.G."/>
            <person name="Sehra H.K."/>
            <person name="Shaw-Smith C."/>
            <person name="Shen H."/>
            <person name="Sheridan E.M."/>
            <person name="Shownkeen R."/>
            <person name="Skuce C.D."/>
            <person name="Smith M.L."/>
            <person name="Sotheran E.C."/>
            <person name="Steingruber H.E."/>
            <person name="Steward C.A."/>
            <person name="Storey R."/>
            <person name="Swann R.M."/>
            <person name="Swarbreck D."/>
            <person name="Tabor P.E."/>
            <person name="Taudien S."/>
            <person name="Taylor T."/>
            <person name="Teague B."/>
            <person name="Thomas K."/>
            <person name="Thorpe A."/>
            <person name="Timms K."/>
            <person name="Tracey A."/>
            <person name="Trevanion S."/>
            <person name="Tromans A.C."/>
            <person name="d'Urso M."/>
            <person name="Verduzco D."/>
            <person name="Villasana D."/>
            <person name="Waldron L."/>
            <person name="Wall M."/>
            <person name="Wang Q."/>
            <person name="Warren J."/>
            <person name="Warry G.L."/>
            <person name="Wei X."/>
            <person name="West A."/>
            <person name="Whitehead S.L."/>
            <person name="Whiteley M.N."/>
            <person name="Wilkinson J.E."/>
            <person name="Willey D.L."/>
            <person name="Williams G."/>
            <person name="Williams L."/>
            <person name="Williamson A."/>
            <person name="Williamson H."/>
            <person name="Wilming L."/>
            <person name="Woodmansey R.L."/>
            <person name="Wray P.W."/>
            <person name="Yen J."/>
            <person name="Zhang J."/>
            <person name="Zhou J."/>
            <person name="Zoghbi H."/>
            <person name="Zorilla S."/>
            <person name="Buck D."/>
            <person name="Reinhardt R."/>
            <person name="Poustka A."/>
            <person name="Rosenthal A."/>
            <person name="Lehrach H."/>
            <person name="Meindl A."/>
            <person name="Minx P.J."/>
            <person name="Hillier L.W."/>
            <person name="Willard H.F."/>
            <person name="Wilson R.K."/>
            <person name="Waterston R.H."/>
            <person name="Rice C.M."/>
            <person name="Vaudin M."/>
            <person name="Coulson A."/>
            <person name="Nelson D.L."/>
            <person name="Weinstock G."/>
            <person name="Sulston J.E."/>
            <person name="Durbin R.M."/>
            <person name="Hubbard T."/>
            <person name="Gibbs R.A."/>
            <person name="Beck S."/>
            <person name="Rogers J."/>
            <person name="Bentley D.R."/>
        </authorList>
    </citation>
    <scope>NUCLEOTIDE SEQUENCE [LARGE SCALE GENOMIC DNA]</scope>
</reference>
<reference key="3">
    <citation type="journal article" date="2004" name="Genome Res.">
        <title>The status, quality, and expansion of the NIH full-length cDNA project: the Mammalian Gene Collection (MGC).</title>
        <authorList>
            <consortium name="The MGC Project Team"/>
        </authorList>
    </citation>
    <scope>NUCLEOTIDE SEQUENCE [LARGE SCALE MRNA]</scope>
    <source>
        <tissue>Brain</tissue>
    </source>
</reference>
<reference key="4">
    <citation type="journal article" date="2012" name="Proc. Natl. Acad. Sci. U.S.A.">
        <title>N-terminal acetylome analyses and functional insights of the N-terminal acetyltransferase NatB.</title>
        <authorList>
            <person name="Van Damme P."/>
            <person name="Lasa M."/>
            <person name="Polevoda B."/>
            <person name="Gazquez C."/>
            <person name="Elosegui-Artola A."/>
            <person name="Kim D.S."/>
            <person name="De Juan-Pardo E."/>
            <person name="Demeyer K."/>
            <person name="Hole K."/>
            <person name="Larrea E."/>
            <person name="Timmerman E."/>
            <person name="Prieto J."/>
            <person name="Arnesen T."/>
            <person name="Sherman F."/>
            <person name="Gevaert K."/>
            <person name="Aldabe R."/>
        </authorList>
    </citation>
    <scope>IDENTIFICATION BY MASS SPECTROMETRY [LARGE SCALE ANALYSIS]</scope>
</reference>
<reference key="5">
    <citation type="journal article" date="2014" name="PLoS ONE">
        <title>Detection of chromosomal breakpoints in patients with developmental delay and speech disorders.</title>
        <authorList>
            <person name="Utami K.H."/>
            <person name="Hillmer A.M."/>
            <person name="Aksoy I."/>
            <person name="Chew E.G."/>
            <person name="Teo A.S."/>
            <person name="Zhang Z."/>
            <person name="Lee C.W."/>
            <person name="Chen P.J."/>
            <person name="Seng C.C."/>
            <person name="Ariyaratne P.N."/>
            <person name="Rouam S.L."/>
            <person name="Soo L.S."/>
            <person name="Yousoof S."/>
            <person name="Prokudin I."/>
            <person name="Peters G."/>
            <person name="Collins F."/>
            <person name="Wilson M."/>
            <person name="Kakakios A."/>
            <person name="Haddad G."/>
            <person name="Menuet A."/>
            <person name="Perche O."/>
            <person name="Tay S.K."/>
            <person name="Sung K.W."/>
            <person name="Ruan X."/>
            <person name="Ruan Y."/>
            <person name="Liu E.T."/>
            <person name="Briault S."/>
            <person name="Jamieson R.V."/>
            <person name="Davila S."/>
            <person name="Cacheux V."/>
        </authorList>
    </citation>
    <scope>TISSUE SPECIFICITY</scope>
</reference>
<reference key="6">
    <citation type="journal article" date="2015" name="Hum. Mol. Genet.">
        <title>Biochemical and cellular analysis of Ogden syndrome reveals downstream Nt-acetylation defects.</title>
        <authorList>
            <person name="Myklebust L.M."/>
            <person name="Van Damme P."/>
            <person name="Stoeve S.I."/>
            <person name="Doerfel M.J."/>
            <person name="Abboud A."/>
            <person name="Kalvik T.V."/>
            <person name="Grauffel C."/>
            <person name="Jonckheere V."/>
            <person name="Wu Y."/>
            <person name="Swensen J."/>
            <person name="Kaasa H."/>
            <person name="Liszczak G."/>
            <person name="Marmorstein R."/>
            <person name="Reuter N."/>
            <person name="Lyon G.J."/>
            <person name="Gevaert K."/>
            <person name="Arnesen T."/>
        </authorList>
    </citation>
    <scope>ACETYLATION AT ALA-2</scope>
    <scope>CLEAVAGE OF INITIATOR METHIONINE</scope>
</reference>
<protein>
    <recommendedName>
        <fullName>Transmembrane protein 47</fullName>
    </recommendedName>
    <alternativeName>
        <fullName>Brain cell membrane protein 1</fullName>
    </alternativeName>
    <alternativeName>
        <fullName>Transmembrane 4 superfamily member 10</fullName>
    </alternativeName>
</protein>
<organism>
    <name type="scientific">Homo sapiens</name>
    <name type="common">Human</name>
    <dbReference type="NCBI Taxonomy" id="9606"/>
    <lineage>
        <taxon>Eukaryota</taxon>
        <taxon>Metazoa</taxon>
        <taxon>Chordata</taxon>
        <taxon>Craniata</taxon>
        <taxon>Vertebrata</taxon>
        <taxon>Euteleostomi</taxon>
        <taxon>Mammalia</taxon>
        <taxon>Eutheria</taxon>
        <taxon>Euarchontoglires</taxon>
        <taxon>Primates</taxon>
        <taxon>Haplorrhini</taxon>
        <taxon>Catarrhini</taxon>
        <taxon>Hominidae</taxon>
        <taxon>Homo</taxon>
    </lineage>
</organism>
<gene>
    <name type="primary">TMEM47</name>
    <name type="synonym">BCMP1</name>
    <name type="synonym">TM4SF10</name>
</gene>
<keyword id="KW-0007">Acetylation</keyword>
<keyword id="KW-0965">Cell junction</keyword>
<keyword id="KW-0472">Membrane</keyword>
<keyword id="KW-1267">Proteomics identification</keyword>
<keyword id="KW-1185">Reference proteome</keyword>
<keyword id="KW-0812">Transmembrane</keyword>
<keyword id="KW-1133">Transmembrane helix</keyword>
<proteinExistence type="evidence at protein level"/>
<evidence type="ECO:0000250" key="1">
    <source>
        <dbReference type="UniProtKB" id="Q9JJG6"/>
    </source>
</evidence>
<evidence type="ECO:0000250" key="2">
    <source>
        <dbReference type="UniProtKB" id="Q9XSV3"/>
    </source>
</evidence>
<evidence type="ECO:0000255" key="3"/>
<evidence type="ECO:0000269" key="4">
    <source>
    </source>
</evidence>
<evidence type="ECO:0000269" key="5">
    <source>
    </source>
</evidence>
<evidence type="ECO:0000305" key="6"/>
<dbReference type="EMBL" id="AL136550">
    <property type="protein sequence ID" value="CAB66485.1"/>
    <property type="molecule type" value="mRNA"/>
</dbReference>
<dbReference type="EMBL" id="AL596285">
    <property type="status" value="NOT_ANNOTATED_CDS"/>
    <property type="molecule type" value="Genomic_DNA"/>
</dbReference>
<dbReference type="EMBL" id="BC039242">
    <property type="protein sequence ID" value="AAH39242.1"/>
    <property type="molecule type" value="mRNA"/>
</dbReference>
<dbReference type="CCDS" id="CCDS14235.1"/>
<dbReference type="RefSeq" id="NP_113630.1">
    <property type="nucleotide sequence ID" value="NM_031442.4"/>
</dbReference>
<dbReference type="SMR" id="Q9BQJ4"/>
<dbReference type="BioGRID" id="123695">
    <property type="interactions" value="9"/>
</dbReference>
<dbReference type="FunCoup" id="Q9BQJ4">
    <property type="interactions" value="609"/>
</dbReference>
<dbReference type="IntAct" id="Q9BQJ4">
    <property type="interactions" value="10"/>
</dbReference>
<dbReference type="STRING" id="9606.ENSP00000275954"/>
<dbReference type="TCDB" id="8.A.16.4.4">
    <property type="family name" value="the ca(+) channel auxiliary subunit Gama1-Gama8 (ccaGama) family"/>
</dbReference>
<dbReference type="iPTMnet" id="Q9BQJ4"/>
<dbReference type="PhosphoSitePlus" id="Q9BQJ4"/>
<dbReference type="SwissPalm" id="Q9BQJ4"/>
<dbReference type="BioMuta" id="TMEM47"/>
<dbReference type="DMDM" id="51316912"/>
<dbReference type="jPOST" id="Q9BQJ4"/>
<dbReference type="MassIVE" id="Q9BQJ4"/>
<dbReference type="PaxDb" id="9606-ENSP00000275954"/>
<dbReference type="PeptideAtlas" id="Q9BQJ4"/>
<dbReference type="ProteomicsDB" id="78693"/>
<dbReference type="Pumba" id="Q9BQJ4"/>
<dbReference type="Antibodypedia" id="71106">
    <property type="antibodies" value="31 antibodies from 8 providers"/>
</dbReference>
<dbReference type="DNASU" id="83604"/>
<dbReference type="Ensembl" id="ENST00000275954.4">
    <property type="protein sequence ID" value="ENSP00000275954.3"/>
    <property type="gene ID" value="ENSG00000147027.4"/>
</dbReference>
<dbReference type="GeneID" id="83604"/>
<dbReference type="KEGG" id="hsa:83604"/>
<dbReference type="MANE-Select" id="ENST00000275954.4">
    <property type="protein sequence ID" value="ENSP00000275954.3"/>
    <property type="RefSeq nucleotide sequence ID" value="NM_031442.4"/>
    <property type="RefSeq protein sequence ID" value="NP_113630.1"/>
</dbReference>
<dbReference type="UCSC" id="uc004ddh.3">
    <property type="organism name" value="human"/>
</dbReference>
<dbReference type="AGR" id="HGNC:18515"/>
<dbReference type="CTD" id="83604"/>
<dbReference type="DisGeNET" id="83604"/>
<dbReference type="GeneCards" id="TMEM47"/>
<dbReference type="HGNC" id="HGNC:18515">
    <property type="gene designation" value="TMEM47"/>
</dbReference>
<dbReference type="HPA" id="ENSG00000147027">
    <property type="expression patterns" value="Low tissue specificity"/>
</dbReference>
<dbReference type="MIM" id="300698">
    <property type="type" value="gene"/>
</dbReference>
<dbReference type="neXtProt" id="NX_Q9BQJ4"/>
<dbReference type="OpenTargets" id="ENSG00000147027"/>
<dbReference type="PharmGKB" id="PA134971248"/>
<dbReference type="VEuPathDB" id="HostDB:ENSG00000147027"/>
<dbReference type="eggNOG" id="KOG4671">
    <property type="taxonomic scope" value="Eukaryota"/>
</dbReference>
<dbReference type="GeneTree" id="ENSGT00530000063484"/>
<dbReference type="HOGENOM" id="CLU_120054_1_0_1"/>
<dbReference type="InParanoid" id="Q9BQJ4"/>
<dbReference type="OMA" id="FVETATM"/>
<dbReference type="OrthoDB" id="8655982at2759"/>
<dbReference type="PAN-GO" id="Q9BQJ4">
    <property type="GO annotations" value="2 GO annotations based on evolutionary models"/>
</dbReference>
<dbReference type="PhylomeDB" id="Q9BQJ4"/>
<dbReference type="TreeFam" id="TF312855"/>
<dbReference type="PathwayCommons" id="Q9BQJ4"/>
<dbReference type="SignaLink" id="Q9BQJ4"/>
<dbReference type="BioGRID-ORCS" id="83604">
    <property type="hits" value="10 hits in 760 CRISPR screens"/>
</dbReference>
<dbReference type="ChiTaRS" id="TMEM47">
    <property type="organism name" value="human"/>
</dbReference>
<dbReference type="GeneWiki" id="TMEM47"/>
<dbReference type="GenomeRNAi" id="83604"/>
<dbReference type="Pharos" id="Q9BQJ4">
    <property type="development level" value="Tdark"/>
</dbReference>
<dbReference type="PRO" id="PR:Q9BQJ4"/>
<dbReference type="Proteomes" id="UP000005640">
    <property type="component" value="Chromosome X"/>
</dbReference>
<dbReference type="RNAct" id="Q9BQJ4">
    <property type="molecule type" value="protein"/>
</dbReference>
<dbReference type="Bgee" id="ENSG00000147027">
    <property type="expression patterns" value="Expressed in choroid plexus epithelium and 206 other cell types or tissues"/>
</dbReference>
<dbReference type="ExpressionAtlas" id="Q9BQJ4">
    <property type="expression patterns" value="baseline and differential"/>
</dbReference>
<dbReference type="GO" id="GO:0005912">
    <property type="term" value="C:adherens junction"/>
    <property type="evidence" value="ECO:0007669"/>
    <property type="project" value="UniProtKB-SubCell"/>
</dbReference>
<dbReference type="GO" id="GO:0005911">
    <property type="term" value="C:cell-cell junction"/>
    <property type="evidence" value="ECO:0000318"/>
    <property type="project" value="GO_Central"/>
</dbReference>
<dbReference type="GO" id="GO:0005886">
    <property type="term" value="C:plasma membrane"/>
    <property type="evidence" value="ECO:0000314"/>
    <property type="project" value="LIFEdb"/>
</dbReference>
<dbReference type="GO" id="GO:0098609">
    <property type="term" value="P:cell-cell adhesion"/>
    <property type="evidence" value="ECO:0000318"/>
    <property type="project" value="GO_Central"/>
</dbReference>
<dbReference type="FunFam" id="1.20.140.150:FF:000010">
    <property type="entry name" value="transmembrane protein 47"/>
    <property type="match status" value="1"/>
</dbReference>
<dbReference type="Gene3D" id="1.20.140.150">
    <property type="match status" value="1"/>
</dbReference>
<dbReference type="InterPro" id="IPR015664">
    <property type="entry name" value="P53_induced"/>
</dbReference>
<dbReference type="InterPro" id="IPR004031">
    <property type="entry name" value="PMP22/EMP/MP20/Claudin"/>
</dbReference>
<dbReference type="PANTHER" id="PTHR14399">
    <property type="entry name" value="P53-INDUCED PROTEIN RELATED"/>
    <property type="match status" value="1"/>
</dbReference>
<dbReference type="PANTHER" id="PTHR14399:SF3">
    <property type="entry name" value="TRANSMEMBRANE PROTEIN 47"/>
    <property type="match status" value="1"/>
</dbReference>
<dbReference type="Pfam" id="PF00822">
    <property type="entry name" value="PMP22_Claudin"/>
    <property type="match status" value="1"/>
</dbReference>
<comment type="function">
    <text evidence="1 2">Regulates cell junction organization in epithelial cells. May play a role in the transition from adherens junction to tight junction assembly. May regulate F-actin polymerization required for tight junctional localization dynamics and affect the junctional localization of PARD6B. During podocyte differentiation may negatively regulate activity of FYN and subsequently the abundance of nephrin (By similarity).</text>
</comment>
<comment type="subunit">
    <text evidence="1 2">Interacts with CTNNB1, CTNNA1, PRKCI, PARD6B, FYB1.</text>
</comment>
<comment type="interaction">
    <interactant intactId="EBI-13370320">
        <id>Q9BQJ4</id>
    </interactant>
    <interactant intactId="EBI-18304435">
        <id>Q5JX71</id>
        <label>FAM209A</label>
    </interactant>
    <organismsDiffer>false</organismsDiffer>
    <experiments>3</experiments>
</comment>
<comment type="interaction">
    <interactant intactId="EBI-13370320">
        <id>Q9BQJ4</id>
    </interactant>
    <interactant intactId="EBI-466029">
        <id>P42858</id>
        <label>HTT</label>
    </interactant>
    <organismsDiffer>false</organismsDiffer>
    <experiments>3</experiments>
</comment>
<comment type="interaction">
    <interactant intactId="EBI-13370320">
        <id>Q9BQJ4</id>
    </interactant>
    <interactant intactId="EBI-17498703">
        <id>Q9HBV2</id>
        <label>SPACA1</label>
    </interactant>
    <organismsDiffer>false</organismsDiffer>
    <experiments>3</experiments>
</comment>
<comment type="interaction">
    <interactant intactId="EBI-13370320">
        <id>Q9BQJ4</id>
    </interactant>
    <interactant intactId="EBI-18194029">
        <id>Q96L08</id>
        <label>SUSD3</label>
    </interactant>
    <organismsDiffer>false</organismsDiffer>
    <experiments>3</experiments>
</comment>
<comment type="interaction">
    <interactant intactId="EBI-13370320">
        <id>Q9BQJ4</id>
    </interactant>
    <interactant intactId="EBI-11724423">
        <id>Q7Z7N9</id>
        <label>TMEM179B</label>
    </interactant>
    <organismsDiffer>false</organismsDiffer>
    <experiments>3</experiments>
</comment>
<comment type="subcellular location">
    <subcellularLocation>
        <location evidence="6">Membrane</location>
        <topology evidence="6">Multi-pass membrane protein</topology>
    </subcellularLocation>
    <subcellularLocation>
        <location evidence="2">Cell junction</location>
        <location evidence="2">Adherens junction</location>
    </subcellularLocation>
    <text evidence="1">Colocalizes with FYB1 at cell-cell contacts in podocytes.</text>
</comment>
<comment type="tissue specificity">
    <text evidence="4">Expressed in adult brain, fetal brain, cerebellum, heart, lung, prostate and thyroid.</text>
</comment>
<comment type="similarity">
    <text evidence="6">Belongs to the TMEM47 family.</text>
</comment>
<feature type="initiator methionine" description="Removed" evidence="5">
    <location>
        <position position="1"/>
    </location>
</feature>
<feature type="chain" id="PRO_0000072573" description="Transmembrane protein 47">
    <location>
        <begin position="2"/>
        <end position="181"/>
    </location>
</feature>
<feature type="transmembrane region" description="Helical" evidence="3">
    <location>
        <begin position="21"/>
        <end position="41"/>
    </location>
</feature>
<feature type="transmembrane region" description="Helical" evidence="3">
    <location>
        <begin position="83"/>
        <end position="103"/>
    </location>
</feature>
<feature type="transmembrane region" description="Helical" evidence="3">
    <location>
        <begin position="115"/>
        <end position="135"/>
    </location>
</feature>
<feature type="transmembrane region" description="Helical" evidence="3">
    <location>
        <begin position="152"/>
        <end position="172"/>
    </location>
</feature>
<feature type="modified residue" description="N-acetylalanine" evidence="5">
    <location>
        <position position="2"/>
    </location>
</feature>
<sequence length="181" mass="19998">MASAGSGMEEVRVSVLTPLKLVGLVCIFLALCLDLGAVLSPAWVTADHQYYLSLWESCRKPASLDIWHCESTLSSDWQIATLALLLGGAAIILIAFLVGLISICVGSRRRFYRPVAVMLFAAVVLQVCSLVLYPIKFIETVSLKIYHEFNWGYGLAWGATIFSFGGAILYCLNPKNYEDYY</sequence>
<name>TMM47_HUMAN</name>
<accession>Q9BQJ4</accession>
<accession>Q5JR44</accession>